<keyword id="KW-0167">Capsid protein</keyword>
<keyword id="KW-1139">Helical capsid protein</keyword>
<keyword id="KW-1035">Host cytoplasm</keyword>
<keyword id="KW-1185">Reference proteome</keyword>
<keyword id="KW-0687">Ribonucleoprotein</keyword>
<keyword id="KW-0694">RNA-binding</keyword>
<keyword id="KW-0543">Viral nucleoprotein</keyword>
<keyword id="KW-0946">Virion</keyword>
<dbReference type="EMBL" id="DQ831831">
    <property type="protein sequence ID" value="ABH05070.1"/>
    <property type="molecule type" value="mRNA"/>
</dbReference>
<dbReference type="RefSeq" id="YP_003104767.1">
    <property type="nucleotide sequence ID" value="NC_013108.1"/>
</dbReference>
<dbReference type="SMR" id="Q0PI70"/>
<dbReference type="KEGG" id="vg:8355992"/>
<dbReference type="OrthoDB" id="14554at10239"/>
<dbReference type="Proteomes" id="UP000006676">
    <property type="component" value="Genome"/>
</dbReference>
<dbReference type="GO" id="GO:0019029">
    <property type="term" value="C:helical viral capsid"/>
    <property type="evidence" value="ECO:0007669"/>
    <property type="project" value="UniProtKB-KW"/>
</dbReference>
<dbReference type="GO" id="GO:0030430">
    <property type="term" value="C:host cell cytoplasm"/>
    <property type="evidence" value="ECO:0007669"/>
    <property type="project" value="UniProtKB-SubCell"/>
</dbReference>
<dbReference type="GO" id="GO:1990904">
    <property type="term" value="C:ribonucleoprotein complex"/>
    <property type="evidence" value="ECO:0007669"/>
    <property type="project" value="UniProtKB-KW"/>
</dbReference>
<dbReference type="GO" id="GO:0019013">
    <property type="term" value="C:viral nucleocapsid"/>
    <property type="evidence" value="ECO:0007669"/>
    <property type="project" value="UniProtKB-KW"/>
</dbReference>
<dbReference type="GO" id="GO:0003723">
    <property type="term" value="F:RNA binding"/>
    <property type="evidence" value="ECO:0007669"/>
    <property type="project" value="UniProtKB-KW"/>
</dbReference>
<reference key="1">
    <citation type="journal article" date="2007" name="J. Gen. Virol.">
        <title>A novel, multipartite, negative-strand RNA virus is associated with the ringspot disease of European mountain ash (Sorbus aucuparia L.).</title>
        <authorList>
            <person name="Mielke N."/>
            <person name="Muehlbach H.P."/>
        </authorList>
    </citation>
    <scope>NUCLEOTIDE SEQUENCE [GENOMIC RNA]</scope>
</reference>
<proteinExistence type="evidence at transcript level"/>
<organismHost>
    <name type="scientific">Eriophyes pyri</name>
    <name type="common">pearleaf blister mite</name>
    <dbReference type="NCBI Taxonomy" id="483436"/>
</organismHost>
<organismHost>
    <name type="scientific">Sorbus aucuparia</name>
    <name type="common">European mountain ash</name>
    <name type="synonym">Rowan</name>
    <dbReference type="NCBI Taxonomy" id="36599"/>
</organismHost>
<comment type="function">
    <text>Encapsidates the genome, protecting it from nucleases. The encapsidated genomic RNA is termed the nucleocapsid (NC) and serves as template for viral transcription and replication.</text>
</comment>
<comment type="subunit">
    <text evidence="1">Homomultimerizes to form the nucleocapsid. Binds to viral genomic RNA (By similarity).</text>
</comment>
<comment type="subcellular location">
    <subcellularLocation>
        <location>Virion</location>
    </subcellularLocation>
    <subcellularLocation>
        <location evidence="1">Host cytoplasm</location>
    </subcellularLocation>
</comment>
<organism>
    <name type="scientific">European mountain ash ringspot-associated virus (isolate Sorbus aucuparia)</name>
    <name type="common">EMARAV</name>
    <dbReference type="NCBI Taxonomy" id="1980426"/>
    <lineage>
        <taxon>Viruses</taxon>
        <taxon>Riboviria</taxon>
        <taxon>Orthornavirae</taxon>
        <taxon>Negarnaviricota</taxon>
        <taxon>Polyploviricotina</taxon>
        <taxon>Ellioviricetes</taxon>
        <taxon>Bunyavirales</taxon>
        <taxon>Fimoviridae</taxon>
        <taxon>Emaravirus</taxon>
    </lineage>
</organism>
<accession>Q0PI70</accession>
<evidence type="ECO:0000250" key="1"/>
<evidence type="ECO:0000256" key="2">
    <source>
        <dbReference type="SAM" id="MobiDB-lite"/>
    </source>
</evidence>
<protein>
    <recommendedName>
        <fullName>Nucleoprotein</fullName>
        <shortName>NP</shortName>
    </recommendedName>
    <alternativeName>
        <fullName>Nucleocapsid protein</fullName>
        <shortName>Protein N</shortName>
    </alternativeName>
</protein>
<name>NCAP_EMARV</name>
<sequence>MPIIPKPKSQTKGSVESSKKESRVKMETSDAKYMVGNEVKTIKFLDMRGNIATSARNSLNISPGVFAVNPFLGETLAEDTFNILDYAGLGNVDACASHLSRSQELREQVTEKTLREVPISDSYVLKVVSNLQATTVQNVVSFNKACAVMSFNILRHTTDEMYDWTKNEYVSLGLKEKAAKVNPNIINRLAGQINLSPQSPYYYLVTPGYEFLYDAYPAETIAMTLVKMAYRKTMNLPDSMKDSDICSSLNAKINKRHNLAVNNIDDIIKQIGKKHIEDMYNTLTQNIAMSGKESRNVETAQSFLALIESFKTTT</sequence>
<gene>
    <name type="primary">N</name>
</gene>
<feature type="chain" id="PRO_0000395605" description="Nucleoprotein">
    <location>
        <begin position="1"/>
        <end position="314"/>
    </location>
</feature>
<feature type="region of interest" description="Disordered" evidence="2">
    <location>
        <begin position="1"/>
        <end position="27"/>
    </location>
</feature>
<feature type="compositionally biased region" description="Basic and acidic residues" evidence="2">
    <location>
        <begin position="17"/>
        <end position="27"/>
    </location>
</feature>